<reference key="1">
    <citation type="journal article" date="2009" name="PLoS Biol.">
        <title>Lineage-specific biology revealed by a finished genome assembly of the mouse.</title>
        <authorList>
            <person name="Church D.M."/>
            <person name="Goodstadt L."/>
            <person name="Hillier L.W."/>
            <person name="Zody M.C."/>
            <person name="Goldstein S."/>
            <person name="She X."/>
            <person name="Bult C.J."/>
            <person name="Agarwala R."/>
            <person name="Cherry J.L."/>
            <person name="DiCuccio M."/>
            <person name="Hlavina W."/>
            <person name="Kapustin Y."/>
            <person name="Meric P."/>
            <person name="Maglott D."/>
            <person name="Birtle Z."/>
            <person name="Marques A.C."/>
            <person name="Graves T."/>
            <person name="Zhou S."/>
            <person name="Teague B."/>
            <person name="Potamousis K."/>
            <person name="Churas C."/>
            <person name="Place M."/>
            <person name="Herschleb J."/>
            <person name="Runnheim R."/>
            <person name="Forrest D."/>
            <person name="Amos-Landgraf J."/>
            <person name="Schwartz D.C."/>
            <person name="Cheng Z."/>
            <person name="Lindblad-Toh K."/>
            <person name="Eichler E.E."/>
            <person name="Ponting C.P."/>
        </authorList>
    </citation>
    <scope>NUCLEOTIDE SEQUENCE [LARGE SCALE GENOMIC DNA]</scope>
    <source>
        <strain>C57BL/6J</strain>
    </source>
</reference>
<reference key="2">
    <citation type="journal article" date="2018" name="J. Cell Biol.">
        <title>The small GTPase RSG1 controls a final step in primary cilia initiation.</title>
        <authorList>
            <person name="Agbu S.O."/>
            <person name="Liang Y."/>
            <person name="Liu A."/>
            <person name="Anderson K.V."/>
        </authorList>
    </citation>
    <scope>FUNCTION</scope>
    <scope>DISRUPTION PHENOTYPE</scope>
    <scope>SUBCELLULAR LOCATION</scope>
    <scope>MUTAGENESIS OF THR-69 AND VAL-169</scope>
</reference>
<reference evidence="5" key="3">
    <citation type="journal article" date="2022" name="Sci. Adv.">
        <title>Structure of the ciliogenesis-associated CPLANE complex.</title>
        <authorList>
            <person name="Langousis G."/>
            <person name="Cavadini S."/>
            <person name="Boegholm N."/>
            <person name="Lorentzen E."/>
            <person name="Kempf G."/>
            <person name="Matthias P."/>
        </authorList>
    </citation>
    <scope>STRUCTURE BY ELECTRON MICROSCOPY (3.35 ANGSTROMS)</scope>
    <scope>GTP-BINDING</scope>
    <scope>INTERACTION WITH FUZ AND CPLANE COMPLEX</scope>
    <scope>MUTAGENESIS OF VAL-169</scope>
</reference>
<protein>
    <recommendedName>
        <fullName evidence="4">Ciliogenesis and planar polarity effector 2</fullName>
    </recommendedName>
    <alternativeName>
        <fullName evidence="1">REM2- and Rab-like small GTPase 1</fullName>
    </alternativeName>
</protein>
<organism>
    <name type="scientific">Mus musculus</name>
    <name type="common">Mouse</name>
    <dbReference type="NCBI Taxonomy" id="10090"/>
    <lineage>
        <taxon>Eukaryota</taxon>
        <taxon>Metazoa</taxon>
        <taxon>Chordata</taxon>
        <taxon>Craniata</taxon>
        <taxon>Vertebrata</taxon>
        <taxon>Euteleostomi</taxon>
        <taxon>Mammalia</taxon>
        <taxon>Eutheria</taxon>
        <taxon>Euarchontoglires</taxon>
        <taxon>Glires</taxon>
        <taxon>Rodentia</taxon>
        <taxon>Myomorpha</taxon>
        <taxon>Muroidea</taxon>
        <taxon>Muridae</taxon>
        <taxon>Murinae</taxon>
        <taxon>Mus</taxon>
        <taxon>Mus</taxon>
    </lineage>
</organism>
<proteinExistence type="evidence at protein level"/>
<evidence type="ECO:0000250" key="1">
    <source>
        <dbReference type="UniProtKB" id="Q9BU20"/>
    </source>
</evidence>
<evidence type="ECO:0000269" key="2">
    <source>
    </source>
</evidence>
<evidence type="ECO:0000269" key="3">
    <source>
    </source>
</evidence>
<evidence type="ECO:0000305" key="4"/>
<evidence type="ECO:0007744" key="5">
    <source>
        <dbReference type="PDB" id="7Q3E"/>
    </source>
</evidence>
<evidence type="ECO:0007829" key="6">
    <source>
        <dbReference type="PDB" id="7Q3E"/>
    </source>
</evidence>
<gene>
    <name type="primary">Cplane2</name>
    <name type="synonym">Gm723</name>
    <name evidence="1" type="synonym">Rsg1</name>
</gene>
<accession>A2A825</accession>
<sequence length="258" mass="28422">MARPPMHGSVIVPDWHETVEGKEYLACILRKNRRREFGLLERPVLPPSVVIDTASYKIFVSGKSGVGKTALVAKLAGLEVPIVHHETTGIQTTVVFWPAKLKASDCVVMFRFEFWDCGESALKKFDHMLPACKENADAFLFLFSFTDRASFEDLPGQLTRVAGEAPGLVKIVIGSKFDQYMHTDVPARDLTAFRQAWELPLFRVKSVPGRRLADGRTLDGRAGLADTAHVLNGLAEQLWHQDQVAAGLLPSSPESAPG</sequence>
<comment type="function">
    <text evidence="2">Required for efficient primary cilia initiation, regulating a late step in cilia initiation. Plays a role in the final maturation of the mother centriole and ciliary vesicle that allows extension of the ciliary axoneme.</text>
</comment>
<comment type="subunit">
    <text evidence="3">Interacts with FUZ. Associates with the CPLANE (ciliogenesis and planar polarity effectors) complex via its interaction with FUZ.</text>
</comment>
<comment type="subcellular location">
    <subcellularLocation>
        <location evidence="2">Cytoplasm</location>
        <location evidence="2">Cytoskeleton</location>
        <location evidence="2">Cilium basal body</location>
    </subcellularLocation>
    <subcellularLocation>
        <location evidence="2">Cytoplasm</location>
        <location evidence="2">Cytoskeleton</location>
        <location evidence="2">Microtubule organizing center</location>
        <location evidence="2">Centrosome</location>
        <location evidence="2">Centriole</location>
    </subcellularLocation>
    <text evidence="2">Localizes at the transition zone, a region between the basal body and the ciliary axoneme. Recruitment to the centriole depends on TTBK2, INTU, and its own GTPase activity.</text>
</comment>
<comment type="disruption phenotype">
    <text evidence="2">Embryos show ciliopathy-like syndrome of defects that include polydactyly, loss of ventral neural cell types, craniofacial defects, and heart defects that are likely to be responsible for death before E12.5 of gestation. Mutant embryos have fewer primary cilia than wild-type embryos, but the cilia that form are of normal length and traffic Hedgehog pathway proteins within the cilium correctly. Although the early steps of cilia initiation proceed normally in mutant cells, mother centrioles fail to extend the microtubule axoneme and fail to move the ciliary vesicle to the cell surface efficiently.</text>
</comment>
<comment type="similarity">
    <text evidence="4">Belongs to the small GTPase superfamily. Rab family.</text>
</comment>
<keyword id="KW-0002">3D-structure</keyword>
<keyword id="KW-0966">Cell projection</keyword>
<keyword id="KW-0969">Cilium</keyword>
<keyword id="KW-0970">Cilium biogenesis/degradation</keyword>
<keyword id="KW-0963">Cytoplasm</keyword>
<keyword id="KW-0206">Cytoskeleton</keyword>
<keyword id="KW-0268">Exocytosis</keyword>
<keyword id="KW-0342">GTP-binding</keyword>
<keyword id="KW-0547">Nucleotide-binding</keyword>
<keyword id="KW-0653">Protein transport</keyword>
<keyword id="KW-1185">Reference proteome</keyword>
<keyword id="KW-0813">Transport</keyword>
<name>CPLN2_MOUSE</name>
<dbReference type="EMBL" id="AL607087">
    <property type="status" value="NOT_ANNOTATED_CDS"/>
    <property type="molecule type" value="Genomic_DNA"/>
</dbReference>
<dbReference type="CCDS" id="CCDS38937.1"/>
<dbReference type="RefSeq" id="NP_001074643.1">
    <property type="nucleotide sequence ID" value="NM_001081174.2"/>
</dbReference>
<dbReference type="PDB" id="7Q3E">
    <property type="method" value="EM"/>
    <property type="resolution" value="3.35 A"/>
    <property type="chains" value="D=1-258"/>
</dbReference>
<dbReference type="PDBsum" id="7Q3E"/>
<dbReference type="EMDB" id="EMD-13790"/>
<dbReference type="SMR" id="A2A825"/>
<dbReference type="FunCoup" id="A2A825">
    <property type="interactions" value="428"/>
</dbReference>
<dbReference type="STRING" id="10090.ENSMUSP00000095422"/>
<dbReference type="iPTMnet" id="A2A825"/>
<dbReference type="PhosphoSitePlus" id="A2A825"/>
<dbReference type="PaxDb" id="10090-ENSMUSP00000095422"/>
<dbReference type="ProteomicsDB" id="257043"/>
<dbReference type="Antibodypedia" id="29156">
    <property type="antibodies" value="50 antibodies from 14 providers"/>
</dbReference>
<dbReference type="Ensembl" id="ENSMUST00000097813.3">
    <property type="protein sequence ID" value="ENSMUSP00000095422.3"/>
    <property type="gene ID" value="ENSMUSG00000073733.5"/>
</dbReference>
<dbReference type="GeneID" id="76166"/>
<dbReference type="KEGG" id="mmu:76166"/>
<dbReference type="UCSC" id="uc012doa.1">
    <property type="organism name" value="mouse"/>
</dbReference>
<dbReference type="AGR" id="MGI:1923416"/>
<dbReference type="CTD" id="79363"/>
<dbReference type="MGI" id="MGI:1923416">
    <property type="gene designation" value="Cplane2"/>
</dbReference>
<dbReference type="VEuPathDB" id="HostDB:ENSMUSG00000073733"/>
<dbReference type="eggNOG" id="KOG0395">
    <property type="taxonomic scope" value="Eukaryota"/>
</dbReference>
<dbReference type="GeneTree" id="ENSGT00390000006521"/>
<dbReference type="HOGENOM" id="CLU_094613_0_0_1"/>
<dbReference type="InParanoid" id="A2A825"/>
<dbReference type="OMA" id="PSMHHET"/>
<dbReference type="OrthoDB" id="10266641at2759"/>
<dbReference type="PhylomeDB" id="A2A825"/>
<dbReference type="TreeFam" id="TF329319"/>
<dbReference type="BioGRID-ORCS" id="76166">
    <property type="hits" value="5 hits in 76 CRISPR screens"/>
</dbReference>
<dbReference type="PRO" id="PR:A2A825"/>
<dbReference type="Proteomes" id="UP000000589">
    <property type="component" value="Chromosome 4"/>
</dbReference>
<dbReference type="RNAct" id="A2A825">
    <property type="molecule type" value="protein"/>
</dbReference>
<dbReference type="Bgee" id="ENSMUSG00000073733">
    <property type="expression patterns" value="Expressed in embryonic facial prominence and 62 other cell types or tissues"/>
</dbReference>
<dbReference type="ExpressionAtlas" id="A2A825">
    <property type="expression patterns" value="baseline and differential"/>
</dbReference>
<dbReference type="GO" id="GO:0005814">
    <property type="term" value="C:centriole"/>
    <property type="evidence" value="ECO:0000314"/>
    <property type="project" value="MGI"/>
</dbReference>
<dbReference type="GO" id="GO:0036064">
    <property type="term" value="C:ciliary basal body"/>
    <property type="evidence" value="ECO:0000250"/>
    <property type="project" value="UniProtKB"/>
</dbReference>
<dbReference type="GO" id="GO:0097546">
    <property type="term" value="C:ciliary base"/>
    <property type="evidence" value="ECO:0000314"/>
    <property type="project" value="MGI"/>
</dbReference>
<dbReference type="GO" id="GO:0035869">
    <property type="term" value="C:ciliary transition zone"/>
    <property type="evidence" value="ECO:0000314"/>
    <property type="project" value="MGI"/>
</dbReference>
<dbReference type="GO" id="GO:0005737">
    <property type="term" value="C:cytoplasm"/>
    <property type="evidence" value="ECO:0007669"/>
    <property type="project" value="UniProtKB-KW"/>
</dbReference>
<dbReference type="GO" id="GO:0005525">
    <property type="term" value="F:GTP binding"/>
    <property type="evidence" value="ECO:0000314"/>
    <property type="project" value="UniProtKB"/>
</dbReference>
<dbReference type="GO" id="GO:0003924">
    <property type="term" value="F:GTPase activity"/>
    <property type="evidence" value="ECO:0000315"/>
    <property type="project" value="MGI"/>
</dbReference>
<dbReference type="GO" id="GO:0035082">
    <property type="term" value="P:axoneme assembly"/>
    <property type="evidence" value="ECO:0000315"/>
    <property type="project" value="MGI"/>
</dbReference>
<dbReference type="GO" id="GO:0060271">
    <property type="term" value="P:cilium assembly"/>
    <property type="evidence" value="ECO:0000314"/>
    <property type="project" value="MGI"/>
</dbReference>
<dbReference type="GO" id="GO:1904888">
    <property type="term" value="P:cranial skeletal system development"/>
    <property type="evidence" value="ECO:0000315"/>
    <property type="project" value="MGI"/>
</dbReference>
<dbReference type="GO" id="GO:0003274">
    <property type="term" value="P:endocardial cushion fusion"/>
    <property type="evidence" value="ECO:0000315"/>
    <property type="project" value="MGI"/>
</dbReference>
<dbReference type="GO" id="GO:0006887">
    <property type="term" value="P:exocytosis"/>
    <property type="evidence" value="ECO:0007669"/>
    <property type="project" value="UniProtKB-KW"/>
</dbReference>
<dbReference type="GO" id="GO:0060173">
    <property type="term" value="P:limb development"/>
    <property type="evidence" value="ECO:0000315"/>
    <property type="project" value="MGI"/>
</dbReference>
<dbReference type="GO" id="GO:0008104">
    <property type="term" value="P:protein localization"/>
    <property type="evidence" value="ECO:0000250"/>
    <property type="project" value="UniProtKB"/>
</dbReference>
<dbReference type="GO" id="GO:0016485">
    <property type="term" value="P:protein processing"/>
    <property type="evidence" value="ECO:0000315"/>
    <property type="project" value="MGI"/>
</dbReference>
<dbReference type="GO" id="GO:0015031">
    <property type="term" value="P:protein transport"/>
    <property type="evidence" value="ECO:0007669"/>
    <property type="project" value="UniProtKB-KW"/>
</dbReference>
<dbReference type="GO" id="GO:0017157">
    <property type="term" value="P:regulation of exocytosis"/>
    <property type="evidence" value="ECO:0000250"/>
    <property type="project" value="UniProtKB"/>
</dbReference>
<dbReference type="GO" id="GO:0008589">
    <property type="term" value="P:regulation of smoothened signaling pathway"/>
    <property type="evidence" value="ECO:0000315"/>
    <property type="project" value="MGI"/>
</dbReference>
<dbReference type="GO" id="GO:0031338">
    <property type="term" value="P:regulation of vesicle fusion"/>
    <property type="evidence" value="ECO:0000250"/>
    <property type="project" value="UniProtKB"/>
</dbReference>
<dbReference type="GO" id="GO:0007224">
    <property type="term" value="P:smoothened signaling pathway"/>
    <property type="evidence" value="ECO:0000315"/>
    <property type="project" value="MGI"/>
</dbReference>
<dbReference type="CDD" id="cd00882">
    <property type="entry name" value="Ras_like_GTPase"/>
    <property type="match status" value="1"/>
</dbReference>
<dbReference type="FunFam" id="3.40.50.300:FF:001043">
    <property type="entry name" value="ciliogenesis and planar polarity effector 2"/>
    <property type="match status" value="1"/>
</dbReference>
<dbReference type="Gene3D" id="3.40.50.300">
    <property type="entry name" value="P-loop containing nucleotide triphosphate hydrolases"/>
    <property type="match status" value="1"/>
</dbReference>
<dbReference type="InterPro" id="IPR027417">
    <property type="entry name" value="P-loop_NTPase"/>
</dbReference>
<dbReference type="InterPro" id="IPR039677">
    <property type="entry name" value="RSG1"/>
</dbReference>
<dbReference type="InterPro" id="IPR001806">
    <property type="entry name" value="Small_GTPase"/>
</dbReference>
<dbReference type="PANTHER" id="PTHR14983">
    <property type="entry name" value="CILIOGENESIS AND PLANAR POLARITY EFFECTOR 2"/>
    <property type="match status" value="1"/>
</dbReference>
<dbReference type="PANTHER" id="PTHR14983:SF1">
    <property type="entry name" value="CILIOGENESIS AND PLANAR POLARITY EFFECTOR 2"/>
    <property type="match status" value="1"/>
</dbReference>
<dbReference type="Pfam" id="PF00071">
    <property type="entry name" value="Ras"/>
    <property type="match status" value="1"/>
</dbReference>
<dbReference type="PRINTS" id="PR00449">
    <property type="entry name" value="RASTRNSFRMNG"/>
</dbReference>
<dbReference type="SUPFAM" id="SSF52540">
    <property type="entry name" value="P-loop containing nucleoside triphosphate hydrolases"/>
    <property type="match status" value="1"/>
</dbReference>
<feature type="chain" id="PRO_0000284539" description="Ciliogenesis and planar polarity effector 2">
    <location>
        <begin position="1"/>
        <end position="258"/>
    </location>
</feature>
<feature type="region of interest" description="Small GTPase-like">
    <location>
        <begin position="51"/>
        <end position="258"/>
    </location>
</feature>
<feature type="binding site" evidence="3 5">
    <location>
        <position position="64"/>
    </location>
    <ligand>
        <name>GTP</name>
        <dbReference type="ChEBI" id="CHEBI:37565"/>
    </ligand>
</feature>
<feature type="binding site" evidence="3 5">
    <location>
        <position position="65"/>
    </location>
    <ligand>
        <name>GTP</name>
        <dbReference type="ChEBI" id="CHEBI:37565"/>
    </ligand>
</feature>
<feature type="binding site" evidence="3 5">
    <location>
        <position position="67"/>
    </location>
    <ligand>
        <name>GTP</name>
        <dbReference type="ChEBI" id="CHEBI:37565"/>
    </ligand>
</feature>
<feature type="binding site" evidence="3 5">
    <location>
        <position position="68"/>
    </location>
    <ligand>
        <name>GTP</name>
        <dbReference type="ChEBI" id="CHEBI:37565"/>
    </ligand>
</feature>
<feature type="binding site" evidence="3 5">
    <location>
        <position position="69"/>
    </location>
    <ligand>
        <name>GTP</name>
        <dbReference type="ChEBI" id="CHEBI:37565"/>
    </ligand>
</feature>
<feature type="binding site" evidence="3 5">
    <location>
        <position position="70"/>
    </location>
    <ligand>
        <name>GTP</name>
        <dbReference type="ChEBI" id="CHEBI:37565"/>
    </ligand>
</feature>
<feature type="binding site" evidence="3 5">
    <location>
        <position position="82"/>
    </location>
    <ligand>
        <name>GTP</name>
        <dbReference type="ChEBI" id="CHEBI:37565"/>
    </ligand>
</feature>
<feature type="binding site" evidence="3 5">
    <location>
        <position position="84"/>
    </location>
    <ligand>
        <name>GTP</name>
        <dbReference type="ChEBI" id="CHEBI:37565"/>
    </ligand>
</feature>
<feature type="binding site" evidence="3 5">
    <location>
        <position position="87"/>
    </location>
    <ligand>
        <name>GTP</name>
        <dbReference type="ChEBI" id="CHEBI:37565"/>
    </ligand>
</feature>
<feature type="binding site" evidence="3 5">
    <location>
        <position position="176"/>
    </location>
    <ligand>
        <name>GTP</name>
        <dbReference type="ChEBI" id="CHEBI:37565"/>
    </ligand>
</feature>
<feature type="binding site" evidence="3 5">
    <location>
        <position position="178"/>
    </location>
    <ligand>
        <name>GTP</name>
        <dbReference type="ChEBI" id="CHEBI:37565"/>
    </ligand>
</feature>
<feature type="binding site" evidence="3 5">
    <location>
        <position position="206"/>
    </location>
    <ligand>
        <name>GTP</name>
        <dbReference type="ChEBI" id="CHEBI:37565"/>
    </ligand>
</feature>
<feature type="mutagenesis site" description="Loss of localization to the cilium basal body." evidence="2">
    <original>T</original>
    <variation>N</variation>
    <location>
        <position position="69"/>
    </location>
</feature>
<feature type="mutagenesis site" description="In pxb (pixiebob phenotype); embryos show ciliopathy-like syndrome of defects that include polydactyly, loss of ventral neural cell types, craniofacial defects, and heart defects that are likely to be responsible for death before E12.5 of gestation. Mutant embryos have fewer primary cilia than wild-type embryos, but the cilia that form are of normal length and traffic Hedgehog pathway proteins within the cilium correctly. Although the early steps of cilia initiation proceed normally in mutant cells, mother centrioles fail to extend the microtubule axoneme and fail to move the ciliary vesicle to the cell surface efficiently. No effect on its localization to the cilium basal body or its interaction with FUZ." evidence="2 3">
    <original>V</original>
    <variation>D</variation>
    <location>
        <position position="169"/>
    </location>
</feature>
<feature type="helix" evidence="6">
    <location>
        <begin position="15"/>
        <end position="17"/>
    </location>
</feature>
<feature type="helix" evidence="6">
    <location>
        <begin position="19"/>
        <end position="25"/>
    </location>
</feature>
<feature type="turn" evidence="6">
    <location>
        <begin position="26"/>
        <end position="28"/>
    </location>
</feature>
<feature type="strand" evidence="6">
    <location>
        <begin position="52"/>
        <end position="61"/>
    </location>
</feature>
<feature type="helix" evidence="6">
    <location>
        <begin position="68"/>
        <end position="76"/>
    </location>
</feature>
<feature type="strand" evidence="6">
    <location>
        <begin position="89"/>
        <end position="100"/>
    </location>
</feature>
<feature type="turn" evidence="6">
    <location>
        <begin position="102"/>
        <end position="104"/>
    </location>
</feature>
<feature type="strand" evidence="6">
    <location>
        <begin position="106"/>
        <end position="116"/>
    </location>
</feature>
<feature type="helix" evidence="6">
    <location>
        <begin position="119"/>
        <end position="124"/>
    </location>
</feature>
<feature type="helix" evidence="6">
    <location>
        <begin position="128"/>
        <end position="131"/>
    </location>
</feature>
<feature type="strand" evidence="6">
    <location>
        <begin position="138"/>
        <end position="144"/>
    </location>
</feature>
<feature type="helix" evidence="6">
    <location>
        <begin position="148"/>
        <end position="152"/>
    </location>
</feature>
<feature type="helix" evidence="6">
    <location>
        <begin position="154"/>
        <end position="160"/>
    </location>
</feature>
<feature type="strand" evidence="6">
    <location>
        <begin position="169"/>
        <end position="175"/>
    </location>
</feature>
<feature type="helix" evidence="6">
    <location>
        <begin position="180"/>
        <end position="182"/>
    </location>
</feature>
<feature type="helix" evidence="6">
    <location>
        <begin position="187"/>
        <end position="197"/>
    </location>
</feature>
<feature type="helix" evidence="6">
    <location>
        <begin position="222"/>
        <end position="244"/>
    </location>
</feature>